<evidence type="ECO:0000255" key="1">
    <source>
        <dbReference type="HAMAP-Rule" id="MF_00068"/>
    </source>
</evidence>
<organism>
    <name type="scientific">Rippkaea orientalis (strain PCC 8801 / RF-1)</name>
    <name type="common">Cyanothece sp. (strain PCC 8801)</name>
    <dbReference type="NCBI Taxonomy" id="41431"/>
    <lineage>
        <taxon>Bacteria</taxon>
        <taxon>Bacillati</taxon>
        <taxon>Cyanobacteriota</taxon>
        <taxon>Cyanophyceae</taxon>
        <taxon>Oscillatoriophycideae</taxon>
        <taxon>Chroococcales</taxon>
        <taxon>Aphanothecaceae</taxon>
        <taxon>Rippkaea</taxon>
        <taxon>Rippkaea orientalis</taxon>
    </lineage>
</organism>
<comment type="function">
    <text evidence="1">Specifically catalyzes the cleavage of the D-lactyl ether substituent of MurNAc 6-phosphate, producing GlcNAc 6-phosphate and D-lactate.</text>
</comment>
<comment type="catalytic activity">
    <reaction evidence="1">
        <text>N-acetyl-D-muramate 6-phosphate + H2O = N-acetyl-D-glucosamine 6-phosphate + (R)-lactate</text>
        <dbReference type="Rhea" id="RHEA:26410"/>
        <dbReference type="ChEBI" id="CHEBI:15377"/>
        <dbReference type="ChEBI" id="CHEBI:16004"/>
        <dbReference type="ChEBI" id="CHEBI:57513"/>
        <dbReference type="ChEBI" id="CHEBI:58722"/>
        <dbReference type="EC" id="4.2.1.126"/>
    </reaction>
</comment>
<comment type="pathway">
    <text evidence="1">Amino-sugar metabolism; N-acetylmuramate degradation.</text>
</comment>
<comment type="subunit">
    <text evidence="1">Homodimer.</text>
</comment>
<comment type="miscellaneous">
    <text evidence="1">A lyase-type mechanism (elimination/hydration) is suggested for the cleavage of the lactyl ether bond of MurNAc 6-phosphate, with the formation of an alpha,beta-unsaturated aldehyde intermediate with (E)-stereochemistry, followed by the syn addition of water to give product.</text>
</comment>
<comment type="similarity">
    <text evidence="1">Belongs to the GCKR-like family. MurNAc-6-P etherase subfamily.</text>
</comment>
<feature type="chain" id="PRO_1000116991" description="N-acetylmuramic acid 6-phosphate etherase">
    <location>
        <begin position="1"/>
        <end position="306"/>
    </location>
</feature>
<feature type="domain" description="SIS" evidence="1">
    <location>
        <begin position="59"/>
        <end position="222"/>
    </location>
</feature>
<feature type="active site" description="Proton donor" evidence="1">
    <location>
        <position position="87"/>
    </location>
</feature>
<feature type="active site" evidence="1">
    <location>
        <position position="118"/>
    </location>
</feature>
<accession>B7JYZ1</accession>
<sequence length="306" mass="33030">MDQLEERGHLLTEQINPKSRNLDQLTPLELVDLFNQEDAQTLRAIAQARQELAQAIEITAQALGRGGRLFYVGAGTSGRLGVLDAAECPPTFCTHPDLVQGIIAGGAAALVRSSENLEDRPEDGASAIAQRHIIDKDVVVGISAGGTTPFVHGAIEAAKQRGAKTIAMSCVPIEQVPIIVDIDIRLLTGPEILAGSTRLKAGTVTKMALNILSTGVMVCLGKVYGNRMVDVSVTNRKLHDRALRMLQDLTDLSREEAGFLLERSGRKVKLALLMHWTGLDAQMGQELLNNYHGNLRNAVQGYKTNV</sequence>
<dbReference type="EC" id="4.2.1.126" evidence="1"/>
<dbReference type="EMBL" id="CP001287">
    <property type="protein sequence ID" value="ACK66068.1"/>
    <property type="molecule type" value="Genomic_DNA"/>
</dbReference>
<dbReference type="RefSeq" id="WP_012595337.1">
    <property type="nucleotide sequence ID" value="NC_011726.1"/>
</dbReference>
<dbReference type="SMR" id="B7JYZ1"/>
<dbReference type="STRING" id="41431.PCC8801_2034"/>
<dbReference type="KEGG" id="cyp:PCC8801_2034"/>
<dbReference type="eggNOG" id="COG2103">
    <property type="taxonomic scope" value="Bacteria"/>
</dbReference>
<dbReference type="HOGENOM" id="CLU_049049_1_1_3"/>
<dbReference type="OrthoDB" id="9813395at2"/>
<dbReference type="UniPathway" id="UPA00342"/>
<dbReference type="Proteomes" id="UP000008204">
    <property type="component" value="Chromosome"/>
</dbReference>
<dbReference type="GO" id="GO:0097367">
    <property type="term" value="F:carbohydrate derivative binding"/>
    <property type="evidence" value="ECO:0007669"/>
    <property type="project" value="InterPro"/>
</dbReference>
<dbReference type="GO" id="GO:0016835">
    <property type="term" value="F:carbon-oxygen lyase activity"/>
    <property type="evidence" value="ECO:0007669"/>
    <property type="project" value="UniProtKB-UniRule"/>
</dbReference>
<dbReference type="GO" id="GO:0016803">
    <property type="term" value="F:ether hydrolase activity"/>
    <property type="evidence" value="ECO:0007669"/>
    <property type="project" value="TreeGrafter"/>
</dbReference>
<dbReference type="GO" id="GO:0046348">
    <property type="term" value="P:amino sugar catabolic process"/>
    <property type="evidence" value="ECO:0007669"/>
    <property type="project" value="InterPro"/>
</dbReference>
<dbReference type="GO" id="GO:0097173">
    <property type="term" value="P:N-acetylmuramic acid catabolic process"/>
    <property type="evidence" value="ECO:0007669"/>
    <property type="project" value="UniProtKB-UniPathway"/>
</dbReference>
<dbReference type="GO" id="GO:0009254">
    <property type="term" value="P:peptidoglycan turnover"/>
    <property type="evidence" value="ECO:0007669"/>
    <property type="project" value="TreeGrafter"/>
</dbReference>
<dbReference type="CDD" id="cd05007">
    <property type="entry name" value="SIS_Etherase"/>
    <property type="match status" value="1"/>
</dbReference>
<dbReference type="FunFam" id="3.40.50.10490:FF:000014">
    <property type="entry name" value="N-acetylmuramic acid 6-phosphate etherase"/>
    <property type="match status" value="1"/>
</dbReference>
<dbReference type="Gene3D" id="1.10.8.1080">
    <property type="match status" value="1"/>
</dbReference>
<dbReference type="Gene3D" id="3.40.50.10490">
    <property type="entry name" value="Glucose-6-phosphate isomerase like protein, domain 1"/>
    <property type="match status" value="1"/>
</dbReference>
<dbReference type="HAMAP" id="MF_00068">
    <property type="entry name" value="MurQ"/>
    <property type="match status" value="1"/>
</dbReference>
<dbReference type="InterPro" id="IPR005488">
    <property type="entry name" value="Etherase_MurQ"/>
</dbReference>
<dbReference type="InterPro" id="IPR005486">
    <property type="entry name" value="Glucokinase_regulatory_CS"/>
</dbReference>
<dbReference type="InterPro" id="IPR040190">
    <property type="entry name" value="MURQ/GCKR"/>
</dbReference>
<dbReference type="InterPro" id="IPR001347">
    <property type="entry name" value="SIS_dom"/>
</dbReference>
<dbReference type="InterPro" id="IPR046348">
    <property type="entry name" value="SIS_dom_sf"/>
</dbReference>
<dbReference type="NCBIfam" id="TIGR00274">
    <property type="entry name" value="N-acetylmuramic acid 6-phosphate etherase"/>
    <property type="match status" value="1"/>
</dbReference>
<dbReference type="NCBIfam" id="NF003915">
    <property type="entry name" value="PRK05441.1"/>
    <property type="match status" value="1"/>
</dbReference>
<dbReference type="NCBIfam" id="NF009222">
    <property type="entry name" value="PRK12570.1"/>
    <property type="match status" value="1"/>
</dbReference>
<dbReference type="PANTHER" id="PTHR10088">
    <property type="entry name" value="GLUCOKINASE REGULATORY PROTEIN"/>
    <property type="match status" value="1"/>
</dbReference>
<dbReference type="PANTHER" id="PTHR10088:SF4">
    <property type="entry name" value="GLUCOKINASE REGULATORY PROTEIN"/>
    <property type="match status" value="1"/>
</dbReference>
<dbReference type="Pfam" id="PF20741">
    <property type="entry name" value="GKRP-like_C"/>
    <property type="match status" value="1"/>
</dbReference>
<dbReference type="Pfam" id="PF22645">
    <property type="entry name" value="GKRP_SIS_N"/>
    <property type="match status" value="1"/>
</dbReference>
<dbReference type="SUPFAM" id="SSF53697">
    <property type="entry name" value="SIS domain"/>
    <property type="match status" value="1"/>
</dbReference>
<dbReference type="PROSITE" id="PS01272">
    <property type="entry name" value="GCKR"/>
    <property type="match status" value="1"/>
</dbReference>
<dbReference type="PROSITE" id="PS51464">
    <property type="entry name" value="SIS"/>
    <property type="match status" value="1"/>
</dbReference>
<protein>
    <recommendedName>
        <fullName evidence="1">N-acetylmuramic acid 6-phosphate etherase</fullName>
        <shortName evidence="1">MurNAc-6-P etherase</shortName>
        <ecNumber evidence="1">4.2.1.126</ecNumber>
    </recommendedName>
    <alternativeName>
        <fullName evidence="1">N-acetylmuramic acid 6-phosphate hydrolase</fullName>
    </alternativeName>
    <alternativeName>
        <fullName evidence="1">N-acetylmuramic acid 6-phosphate lyase</fullName>
    </alternativeName>
</protein>
<reference key="1">
    <citation type="journal article" date="2011" name="MBio">
        <title>Novel metabolic attributes of the genus Cyanothece, comprising a group of unicellular nitrogen-fixing Cyanobacteria.</title>
        <authorList>
            <person name="Bandyopadhyay A."/>
            <person name="Elvitigala T."/>
            <person name="Welsh E."/>
            <person name="Stockel J."/>
            <person name="Liberton M."/>
            <person name="Min H."/>
            <person name="Sherman L.A."/>
            <person name="Pakrasi H.B."/>
        </authorList>
    </citation>
    <scope>NUCLEOTIDE SEQUENCE [LARGE SCALE GENOMIC DNA]</scope>
    <source>
        <strain>PCC 8801 / RF-1</strain>
    </source>
</reference>
<gene>
    <name evidence="1" type="primary">murQ</name>
    <name type="ordered locus">PCC8801_2034</name>
</gene>
<proteinExistence type="inferred from homology"/>
<name>MURQ_RIPO1</name>
<keyword id="KW-0119">Carbohydrate metabolism</keyword>
<keyword id="KW-0456">Lyase</keyword>
<keyword id="KW-1185">Reference proteome</keyword>